<evidence type="ECO:0000255" key="1">
    <source>
        <dbReference type="HAMAP-Rule" id="MF_01310"/>
    </source>
</evidence>
<evidence type="ECO:0000305" key="2"/>
<accession>A3N380</accession>
<name>RS11_ACTP2</name>
<proteinExistence type="inferred from homology"/>
<comment type="function">
    <text evidence="1">Located on the platform of the 30S subunit, it bridges several disparate RNA helices of the 16S rRNA. Forms part of the Shine-Dalgarno cleft in the 70S ribosome.</text>
</comment>
<comment type="subunit">
    <text evidence="1">Part of the 30S ribosomal subunit. Interacts with proteins S7 and S18. Binds to IF-3.</text>
</comment>
<comment type="similarity">
    <text evidence="1">Belongs to the universal ribosomal protein uS11 family.</text>
</comment>
<feature type="chain" id="PRO_0000294706" description="Small ribosomal subunit protein uS11">
    <location>
        <begin position="1"/>
        <end position="129"/>
    </location>
</feature>
<organism>
    <name type="scientific">Actinobacillus pleuropneumoniae serotype 5b (strain L20)</name>
    <dbReference type="NCBI Taxonomy" id="416269"/>
    <lineage>
        <taxon>Bacteria</taxon>
        <taxon>Pseudomonadati</taxon>
        <taxon>Pseudomonadota</taxon>
        <taxon>Gammaproteobacteria</taxon>
        <taxon>Pasteurellales</taxon>
        <taxon>Pasteurellaceae</taxon>
        <taxon>Actinobacillus</taxon>
    </lineage>
</organism>
<reference key="1">
    <citation type="journal article" date="2008" name="J. Bacteriol.">
        <title>The complete genome sequence of Actinobacillus pleuropneumoniae L20 (serotype 5b).</title>
        <authorList>
            <person name="Foote S.J."/>
            <person name="Bosse J.T."/>
            <person name="Bouevitch A.B."/>
            <person name="Langford P.R."/>
            <person name="Young N.M."/>
            <person name="Nash J.H.E."/>
        </authorList>
    </citation>
    <scope>NUCLEOTIDE SEQUENCE [LARGE SCALE GENOMIC DNA]</scope>
    <source>
        <strain>L20</strain>
    </source>
</reference>
<sequence>MAKTPVRARKRVKKQIADGVAHIHASFNNTIVTITDRQGNALAWATAGGSGFRGSRKSTPFAAQVAAERCAEAVKEFGLKNLEVMVKGPGPGRESTIRALNAAGFRITNITDVTPIPHNGCRPPKKRRV</sequence>
<gene>
    <name evidence="1" type="primary">rpsK</name>
    <name type="ordered locus">APL_1782</name>
</gene>
<keyword id="KW-1185">Reference proteome</keyword>
<keyword id="KW-0687">Ribonucleoprotein</keyword>
<keyword id="KW-0689">Ribosomal protein</keyword>
<keyword id="KW-0694">RNA-binding</keyword>
<keyword id="KW-0699">rRNA-binding</keyword>
<protein>
    <recommendedName>
        <fullName evidence="1">Small ribosomal subunit protein uS11</fullName>
    </recommendedName>
    <alternativeName>
        <fullName evidence="2">30S ribosomal protein S11</fullName>
    </alternativeName>
</protein>
<dbReference type="EMBL" id="CP000569">
    <property type="protein sequence ID" value="ABN74866.1"/>
    <property type="molecule type" value="Genomic_DNA"/>
</dbReference>
<dbReference type="RefSeq" id="WP_005599323.1">
    <property type="nucleotide sequence ID" value="NC_009053.1"/>
</dbReference>
<dbReference type="SMR" id="A3N380"/>
<dbReference type="STRING" id="416269.APL_1782"/>
<dbReference type="EnsemblBacteria" id="ABN74866">
    <property type="protein sequence ID" value="ABN74866"/>
    <property type="gene ID" value="APL_1782"/>
</dbReference>
<dbReference type="GeneID" id="92743632"/>
<dbReference type="KEGG" id="apl:APL_1782"/>
<dbReference type="eggNOG" id="COG0100">
    <property type="taxonomic scope" value="Bacteria"/>
</dbReference>
<dbReference type="HOGENOM" id="CLU_072439_5_0_6"/>
<dbReference type="Proteomes" id="UP000001432">
    <property type="component" value="Chromosome"/>
</dbReference>
<dbReference type="GO" id="GO:1990904">
    <property type="term" value="C:ribonucleoprotein complex"/>
    <property type="evidence" value="ECO:0007669"/>
    <property type="project" value="UniProtKB-KW"/>
</dbReference>
<dbReference type="GO" id="GO:0005840">
    <property type="term" value="C:ribosome"/>
    <property type="evidence" value="ECO:0007669"/>
    <property type="project" value="UniProtKB-KW"/>
</dbReference>
<dbReference type="GO" id="GO:0019843">
    <property type="term" value="F:rRNA binding"/>
    <property type="evidence" value="ECO:0007669"/>
    <property type="project" value="UniProtKB-UniRule"/>
</dbReference>
<dbReference type="GO" id="GO:0003735">
    <property type="term" value="F:structural constituent of ribosome"/>
    <property type="evidence" value="ECO:0007669"/>
    <property type="project" value="InterPro"/>
</dbReference>
<dbReference type="GO" id="GO:0006412">
    <property type="term" value="P:translation"/>
    <property type="evidence" value="ECO:0007669"/>
    <property type="project" value="UniProtKB-UniRule"/>
</dbReference>
<dbReference type="FunFam" id="3.30.420.80:FF:000001">
    <property type="entry name" value="30S ribosomal protein S11"/>
    <property type="match status" value="1"/>
</dbReference>
<dbReference type="Gene3D" id="3.30.420.80">
    <property type="entry name" value="Ribosomal protein S11"/>
    <property type="match status" value="1"/>
</dbReference>
<dbReference type="HAMAP" id="MF_01310">
    <property type="entry name" value="Ribosomal_uS11"/>
    <property type="match status" value="1"/>
</dbReference>
<dbReference type="InterPro" id="IPR001971">
    <property type="entry name" value="Ribosomal_uS11"/>
</dbReference>
<dbReference type="InterPro" id="IPR019981">
    <property type="entry name" value="Ribosomal_uS11_bac-type"/>
</dbReference>
<dbReference type="InterPro" id="IPR018102">
    <property type="entry name" value="Ribosomal_uS11_CS"/>
</dbReference>
<dbReference type="InterPro" id="IPR036967">
    <property type="entry name" value="Ribosomal_uS11_sf"/>
</dbReference>
<dbReference type="NCBIfam" id="NF003698">
    <property type="entry name" value="PRK05309.1"/>
    <property type="match status" value="1"/>
</dbReference>
<dbReference type="NCBIfam" id="TIGR03632">
    <property type="entry name" value="uS11_bact"/>
    <property type="match status" value="1"/>
</dbReference>
<dbReference type="PANTHER" id="PTHR11759">
    <property type="entry name" value="40S RIBOSOMAL PROTEIN S14/30S RIBOSOMAL PROTEIN S11"/>
    <property type="match status" value="1"/>
</dbReference>
<dbReference type="Pfam" id="PF00411">
    <property type="entry name" value="Ribosomal_S11"/>
    <property type="match status" value="1"/>
</dbReference>
<dbReference type="PIRSF" id="PIRSF002131">
    <property type="entry name" value="Ribosomal_S11"/>
    <property type="match status" value="1"/>
</dbReference>
<dbReference type="SUPFAM" id="SSF53137">
    <property type="entry name" value="Translational machinery components"/>
    <property type="match status" value="1"/>
</dbReference>
<dbReference type="PROSITE" id="PS00054">
    <property type="entry name" value="RIBOSOMAL_S11"/>
    <property type="match status" value="1"/>
</dbReference>